<sequence length="761" mass="83271">MLRLPRITRRALSSGALAPHFDRPLPPPPPAPPAPLCALPPLTAPDALAPLTRRTVRHADALVARIAAAPAHPDPAELRRVVKNLDRLSDVLCGVIDMCELVRNVHPDPHWVAAAEKTYETLCSFMNQLNTSTGLYDALVATVSHTFPGNPLSPAELRVAQTFLSDFERSGIQLPPGVRAKFVRHSDNILSLGRTFLSFAAAGPSADTPIEIPEPEVLLAGLSSKFVASLPRKKRKGPALLAPGSWEAQMIGRYADNEEARRLVYIGSMREDKDRVYVLETMLKERAELAHVLGKETWADVALSDKMAKTPQNVLQFLTSLATHHRPSAAADVAALQRLKALSTVSRTSSQLPTVHAWDRDHYAEQYAASLLPNGSLPSITPYFSVGTAMSGLSHMLSRLYGISFKPVSVAHGEVWHPSVRRLDVMDEHGKRIGVIYCDLFSRPGKPSAGAAHYTVRCSRRVDDDPSEGDGLPPGWDQHLGKGMEVQGEALHGKEGKYQLPIVVLTTDFGTVEESGPALLGWNDLETLFHEMGHAIHSMIGQTEFHNVSGTRCATDFVELPSILMEHFISSPAVLSTFATHYTTNEPLPIPLIQAHLQLDQSLKALETHSQILMALLDQKYHSIKHGEQLDSTRVWNELQSQVGVIPPVRGTAWQTQFGHLYGYGATYYSYLFDRAIAGKIWSSLFARGRTGPAAANHDPAAAEDILSREGGEAFKEKVLKWGGGRDPWEMVGDVIGGAEGEQVAKGDEKAMELVGRWMIK</sequence>
<keyword id="KW-0378">Hydrolase</keyword>
<keyword id="KW-0479">Metal-binding</keyword>
<keyword id="KW-0482">Metalloprotease</keyword>
<keyword id="KW-0496">Mitochondrion</keyword>
<keyword id="KW-0645">Protease</keyword>
<keyword id="KW-0809">Transit peptide</keyword>
<keyword id="KW-0862">Zinc</keyword>
<dbReference type="EC" id="3.4.24.59"/>
<dbReference type="EMBL" id="AAEY01000013">
    <property type="protein sequence ID" value="EAL22217.1"/>
    <property type="molecule type" value="Genomic_DNA"/>
</dbReference>
<dbReference type="RefSeq" id="XP_776864.1">
    <property type="nucleotide sequence ID" value="XM_771771.1"/>
</dbReference>
<dbReference type="SMR" id="P0CQ19"/>
<dbReference type="GeneID" id="4935020"/>
<dbReference type="KEGG" id="cnb:CNBC3550"/>
<dbReference type="VEuPathDB" id="FungiDB:CNBC3550"/>
<dbReference type="HOGENOM" id="CLU_001805_0_0_1"/>
<dbReference type="OrthoDB" id="2823at5206"/>
<dbReference type="GO" id="GO:0005759">
    <property type="term" value="C:mitochondrial matrix"/>
    <property type="evidence" value="ECO:0007669"/>
    <property type="project" value="UniProtKB-SubCell"/>
</dbReference>
<dbReference type="GO" id="GO:0046872">
    <property type="term" value="F:metal ion binding"/>
    <property type="evidence" value="ECO:0007669"/>
    <property type="project" value="UniProtKB-KW"/>
</dbReference>
<dbReference type="GO" id="GO:0004222">
    <property type="term" value="F:metalloendopeptidase activity"/>
    <property type="evidence" value="ECO:0007669"/>
    <property type="project" value="UniProtKB-EC"/>
</dbReference>
<dbReference type="GO" id="GO:0006518">
    <property type="term" value="P:peptide metabolic process"/>
    <property type="evidence" value="ECO:0007669"/>
    <property type="project" value="TreeGrafter"/>
</dbReference>
<dbReference type="GO" id="GO:0006627">
    <property type="term" value="P:protein processing involved in protein targeting to mitochondrion"/>
    <property type="evidence" value="ECO:0007669"/>
    <property type="project" value="TreeGrafter"/>
</dbReference>
<dbReference type="CDD" id="cd06457">
    <property type="entry name" value="M3A_MIP"/>
    <property type="match status" value="1"/>
</dbReference>
<dbReference type="FunFam" id="3.40.390.10:FF:000055">
    <property type="entry name" value="Related to mitochondrial intermediate peptidase"/>
    <property type="match status" value="1"/>
</dbReference>
<dbReference type="Gene3D" id="3.40.390.10">
    <property type="entry name" value="Collagenase (Catalytic Domain)"/>
    <property type="match status" value="1"/>
</dbReference>
<dbReference type="Gene3D" id="1.10.1370.10">
    <property type="entry name" value="Neurolysin, domain 3"/>
    <property type="match status" value="1"/>
</dbReference>
<dbReference type="InterPro" id="IPR033851">
    <property type="entry name" value="M3A_MIP"/>
</dbReference>
<dbReference type="InterPro" id="IPR024079">
    <property type="entry name" value="MetalloPept_cat_dom_sf"/>
</dbReference>
<dbReference type="InterPro" id="IPR024077">
    <property type="entry name" value="Neurolysin/TOP_dom2"/>
</dbReference>
<dbReference type="InterPro" id="IPR045090">
    <property type="entry name" value="Pept_M3A_M3B"/>
</dbReference>
<dbReference type="InterPro" id="IPR001567">
    <property type="entry name" value="Pept_M3A_M3B_dom"/>
</dbReference>
<dbReference type="PANTHER" id="PTHR11804:SF79">
    <property type="entry name" value="MITOCHONDRIAL INTERMEDIATE PEPTIDASE"/>
    <property type="match status" value="1"/>
</dbReference>
<dbReference type="PANTHER" id="PTHR11804">
    <property type="entry name" value="PROTEASE M3 THIMET OLIGOPEPTIDASE-RELATED"/>
    <property type="match status" value="1"/>
</dbReference>
<dbReference type="Pfam" id="PF01432">
    <property type="entry name" value="Peptidase_M3"/>
    <property type="match status" value="1"/>
</dbReference>
<dbReference type="SUPFAM" id="SSF55486">
    <property type="entry name" value="Metalloproteases ('zincins'), catalytic domain"/>
    <property type="match status" value="1"/>
</dbReference>
<dbReference type="PROSITE" id="PS00142">
    <property type="entry name" value="ZINC_PROTEASE"/>
    <property type="match status" value="1"/>
</dbReference>
<protein>
    <recommendedName>
        <fullName>Mitochondrial intermediate peptidase 1</fullName>
        <shortName>MIP 1</shortName>
        <ecNumber>3.4.24.59</ecNumber>
    </recommendedName>
    <alternativeName>
        <fullName>Octapeptidyl aminopeptidase 1</fullName>
    </alternativeName>
</protein>
<evidence type="ECO:0000250" key="1"/>
<evidence type="ECO:0000255" key="2"/>
<evidence type="ECO:0000255" key="3">
    <source>
        <dbReference type="PROSITE-ProRule" id="PRU10095"/>
    </source>
</evidence>
<evidence type="ECO:0000305" key="4"/>
<feature type="transit peptide" description="Mitochondrion" evidence="2">
    <location>
        <begin position="1"/>
        <end status="unknown"/>
    </location>
</feature>
<feature type="chain" id="PRO_0000410219" description="Mitochondrial intermediate peptidase 1">
    <location>
        <begin status="unknown"/>
        <end position="761"/>
    </location>
</feature>
<feature type="active site" evidence="3">
    <location>
        <position position="531"/>
    </location>
</feature>
<feature type="binding site" evidence="3">
    <location>
        <position position="530"/>
    </location>
    <ligand>
        <name>Zn(2+)</name>
        <dbReference type="ChEBI" id="CHEBI:29105"/>
        <note>catalytic</note>
    </ligand>
</feature>
<feature type="binding site" evidence="3">
    <location>
        <position position="534"/>
    </location>
    <ligand>
        <name>Zn(2+)</name>
        <dbReference type="ChEBI" id="CHEBI:29105"/>
        <note>catalytic</note>
    </ligand>
</feature>
<feature type="binding site" evidence="3">
    <location>
        <position position="537"/>
    </location>
    <ligand>
        <name>Zn(2+)</name>
        <dbReference type="ChEBI" id="CHEBI:29105"/>
        <note>catalytic</note>
    </ligand>
</feature>
<comment type="function">
    <text evidence="1">Cleaves proteins, imported into the mitochondrion, to their mature size. While most mitochondrial precursor proteins are processed to the mature form in one step by mitochondrial processing peptidase (MPP), the sequential cleavage by MIP of an octapeptide after initial processing by MPP is a required step for a subgroup of nuclear-encoded precursor proteins destined for the matrix or the inner membrane (By similarity).</text>
</comment>
<comment type="catalytic activity">
    <reaction>
        <text>Release of an N-terminal octapeptide as second stage of processing of some proteins imported into the mitochondrion.</text>
        <dbReference type="EC" id="3.4.24.59"/>
    </reaction>
</comment>
<comment type="cofactor">
    <cofactor evidence="1">
        <name>Zn(2+)</name>
        <dbReference type="ChEBI" id="CHEBI:29105"/>
    </cofactor>
    <text evidence="1">Binds 1 zinc ion.</text>
</comment>
<comment type="subcellular location">
    <subcellularLocation>
        <location evidence="1">Mitochondrion matrix</location>
    </subcellularLocation>
</comment>
<comment type="similarity">
    <text evidence="4">Belongs to the peptidase M3 family.</text>
</comment>
<accession>P0CQ19</accession>
<accession>Q55VY2</accession>
<accession>Q5KKA9</accession>
<name>PMIP1_CRYNB</name>
<gene>
    <name type="primary">OCT1</name>
    <name type="ordered locus">CNBC3550</name>
</gene>
<proteinExistence type="inferred from homology"/>
<reference key="1">
    <citation type="journal article" date="2005" name="Science">
        <title>The genome of the basidiomycetous yeast and human pathogen Cryptococcus neoformans.</title>
        <authorList>
            <person name="Loftus B.J."/>
            <person name="Fung E."/>
            <person name="Roncaglia P."/>
            <person name="Rowley D."/>
            <person name="Amedeo P."/>
            <person name="Bruno D."/>
            <person name="Vamathevan J."/>
            <person name="Miranda M."/>
            <person name="Anderson I.J."/>
            <person name="Fraser J.A."/>
            <person name="Allen J.E."/>
            <person name="Bosdet I.E."/>
            <person name="Brent M.R."/>
            <person name="Chiu R."/>
            <person name="Doering T.L."/>
            <person name="Donlin M.J."/>
            <person name="D'Souza C.A."/>
            <person name="Fox D.S."/>
            <person name="Grinberg V."/>
            <person name="Fu J."/>
            <person name="Fukushima M."/>
            <person name="Haas B.J."/>
            <person name="Huang J.C."/>
            <person name="Janbon G."/>
            <person name="Jones S.J.M."/>
            <person name="Koo H.L."/>
            <person name="Krzywinski M.I."/>
            <person name="Kwon-Chung K.J."/>
            <person name="Lengeler K.B."/>
            <person name="Maiti R."/>
            <person name="Marra M.A."/>
            <person name="Marra R.E."/>
            <person name="Mathewson C.A."/>
            <person name="Mitchell T.G."/>
            <person name="Pertea M."/>
            <person name="Riggs F.R."/>
            <person name="Salzberg S.L."/>
            <person name="Schein J.E."/>
            <person name="Shvartsbeyn A."/>
            <person name="Shin H."/>
            <person name="Shumway M."/>
            <person name="Specht C.A."/>
            <person name="Suh B.B."/>
            <person name="Tenney A."/>
            <person name="Utterback T.R."/>
            <person name="Wickes B.L."/>
            <person name="Wortman J.R."/>
            <person name="Wye N.H."/>
            <person name="Kronstad J.W."/>
            <person name="Lodge J.K."/>
            <person name="Heitman J."/>
            <person name="Davis R.W."/>
            <person name="Fraser C.M."/>
            <person name="Hyman R.W."/>
        </authorList>
    </citation>
    <scope>NUCLEOTIDE SEQUENCE [LARGE SCALE GENOMIC DNA]</scope>
    <source>
        <strain>B-3501A</strain>
    </source>
</reference>
<organism>
    <name type="scientific">Cryptococcus neoformans var. neoformans serotype D (strain B-3501A)</name>
    <name type="common">Filobasidiella neoformans</name>
    <dbReference type="NCBI Taxonomy" id="283643"/>
    <lineage>
        <taxon>Eukaryota</taxon>
        <taxon>Fungi</taxon>
        <taxon>Dikarya</taxon>
        <taxon>Basidiomycota</taxon>
        <taxon>Agaricomycotina</taxon>
        <taxon>Tremellomycetes</taxon>
        <taxon>Tremellales</taxon>
        <taxon>Cryptococcaceae</taxon>
        <taxon>Cryptococcus</taxon>
        <taxon>Cryptococcus neoformans species complex</taxon>
    </lineage>
</organism>